<name>MQO_FLAPJ</name>
<reference key="1">
    <citation type="journal article" date="2007" name="Nat. Biotechnol.">
        <title>Complete genome sequence of the fish pathogen Flavobacterium psychrophilum.</title>
        <authorList>
            <person name="Duchaud E."/>
            <person name="Boussaha M."/>
            <person name="Loux V."/>
            <person name="Bernardet J.-F."/>
            <person name="Michel C."/>
            <person name="Kerouault B."/>
            <person name="Mondot S."/>
            <person name="Nicolas P."/>
            <person name="Bossy R."/>
            <person name="Caron C."/>
            <person name="Bessieres P."/>
            <person name="Gibrat J.-F."/>
            <person name="Claverol S."/>
            <person name="Dumetz F."/>
            <person name="Le Henaff M."/>
            <person name="Benmansour A."/>
        </authorList>
    </citation>
    <scope>NUCLEOTIDE SEQUENCE [LARGE SCALE GENOMIC DNA]</scope>
    <source>
        <strain>ATCC 49511 / DSM 21280 / CIP 103535 / JIP02/86</strain>
    </source>
</reference>
<protein>
    <recommendedName>
        <fullName evidence="1">Probable malate:quinone oxidoreductase</fullName>
        <ecNumber evidence="1">1.1.5.4</ecNumber>
    </recommendedName>
    <alternativeName>
        <fullName evidence="1">MQO</fullName>
    </alternativeName>
    <alternativeName>
        <fullName evidence="1">Malate dehydrogenase [quinone]</fullName>
    </alternativeName>
</protein>
<organism>
    <name type="scientific">Flavobacterium psychrophilum (strain ATCC 49511 / DSM 21280 / CIP 103535 / JIP02/86)</name>
    <dbReference type="NCBI Taxonomy" id="402612"/>
    <lineage>
        <taxon>Bacteria</taxon>
        <taxon>Pseudomonadati</taxon>
        <taxon>Bacteroidota</taxon>
        <taxon>Flavobacteriia</taxon>
        <taxon>Flavobacteriales</taxon>
        <taxon>Flavobacteriaceae</taxon>
        <taxon>Flavobacterium</taxon>
    </lineage>
</organism>
<evidence type="ECO:0000255" key="1">
    <source>
        <dbReference type="HAMAP-Rule" id="MF_00212"/>
    </source>
</evidence>
<sequence>MARQKIESDIVLIGAGIMSATLGLLLKELNPKLKIEIFERLDIAAAESSDAWNNAGTGHAAFCELNYTPELEDGTIETKKALKISEAFEVSRQLWTYLVEKGLLQNPENFIKSVPHMSLVWGNDNVEYLRKRFEALQQFHLFKTMEFSDNIEKIKEWAPLVMENRNSKDKIAATSMKLGTDVNFGTLTRNMFKYLETLEGVTMHFNHDVYGLKKREDGRWRAKVKNIATGEKKKIFAPFVFIGAGGGSLLLLEKANIPEGQGFGGFPVSGQWLKCTNPEVIQKHSAKVYGKASVGAPPMSVPHIDTRMIDGKKALLFGPYAGFSTKFLKNGSYFDLIKSIEFSNIKPMLGAGVKNIPLTKYLIEQVIQSSDDRLKALKEYVPSAKKEDWVLENAGQRVQVIKKDKDGHGILEFGTEVVTAHDGSLAVLLGASPGASTAVQIMVDLITKCFPEEVKTTIWQNKLKEMIPSYGQSLNENTVLCDQIRAKTNEILKLKV</sequence>
<proteinExistence type="inferred from homology"/>
<accession>A6H0E6</accession>
<keyword id="KW-0274">FAD</keyword>
<keyword id="KW-0285">Flavoprotein</keyword>
<keyword id="KW-0560">Oxidoreductase</keyword>
<keyword id="KW-1185">Reference proteome</keyword>
<keyword id="KW-0816">Tricarboxylic acid cycle</keyword>
<comment type="catalytic activity">
    <reaction evidence="1">
        <text>(S)-malate + a quinone = a quinol + oxaloacetate</text>
        <dbReference type="Rhea" id="RHEA:46012"/>
        <dbReference type="ChEBI" id="CHEBI:15589"/>
        <dbReference type="ChEBI" id="CHEBI:16452"/>
        <dbReference type="ChEBI" id="CHEBI:24646"/>
        <dbReference type="ChEBI" id="CHEBI:132124"/>
        <dbReference type="EC" id="1.1.5.4"/>
    </reaction>
</comment>
<comment type="cofactor">
    <cofactor evidence="1">
        <name>FAD</name>
        <dbReference type="ChEBI" id="CHEBI:57692"/>
    </cofactor>
</comment>
<comment type="pathway">
    <text evidence="1">Carbohydrate metabolism; tricarboxylic acid cycle; oxaloacetate from (S)-malate (quinone route): step 1/1.</text>
</comment>
<comment type="similarity">
    <text evidence="1">Belongs to the MQO family.</text>
</comment>
<feature type="chain" id="PRO_0000325497" description="Probable malate:quinone oxidoreductase">
    <location>
        <begin position="1"/>
        <end position="496"/>
    </location>
</feature>
<dbReference type="EC" id="1.1.5.4" evidence="1"/>
<dbReference type="EMBL" id="AM398681">
    <property type="protein sequence ID" value="CAL43819.1"/>
    <property type="molecule type" value="Genomic_DNA"/>
</dbReference>
<dbReference type="RefSeq" id="YP_001296626.1">
    <property type="nucleotide sequence ID" value="NC_009613.3"/>
</dbReference>
<dbReference type="SMR" id="A6H0E6"/>
<dbReference type="STRING" id="402612.FP1752"/>
<dbReference type="EnsemblBacteria" id="CAL43819">
    <property type="protein sequence ID" value="CAL43819"/>
    <property type="gene ID" value="FP1752"/>
</dbReference>
<dbReference type="KEGG" id="fps:FP1752"/>
<dbReference type="PATRIC" id="fig|402612.5.peg.1771"/>
<dbReference type="eggNOG" id="COG0579">
    <property type="taxonomic scope" value="Bacteria"/>
</dbReference>
<dbReference type="HOGENOM" id="CLU_028151_0_0_10"/>
<dbReference type="OrthoDB" id="9763983at2"/>
<dbReference type="UniPathway" id="UPA00223">
    <property type="reaction ID" value="UER01008"/>
</dbReference>
<dbReference type="Proteomes" id="UP000006394">
    <property type="component" value="Chromosome"/>
</dbReference>
<dbReference type="GO" id="GO:0047545">
    <property type="term" value="F:2-hydroxyglutarate dehydrogenase activity"/>
    <property type="evidence" value="ECO:0007669"/>
    <property type="project" value="TreeGrafter"/>
</dbReference>
<dbReference type="GO" id="GO:0008924">
    <property type="term" value="F:L-malate dehydrogenase (quinone) activity"/>
    <property type="evidence" value="ECO:0007669"/>
    <property type="project" value="UniProtKB-UniRule"/>
</dbReference>
<dbReference type="GO" id="GO:0006099">
    <property type="term" value="P:tricarboxylic acid cycle"/>
    <property type="evidence" value="ECO:0007669"/>
    <property type="project" value="UniProtKB-UniRule"/>
</dbReference>
<dbReference type="Gene3D" id="3.30.9.10">
    <property type="entry name" value="D-Amino Acid Oxidase, subunit A, domain 2"/>
    <property type="match status" value="1"/>
</dbReference>
<dbReference type="Gene3D" id="3.50.50.60">
    <property type="entry name" value="FAD/NAD(P)-binding domain"/>
    <property type="match status" value="1"/>
</dbReference>
<dbReference type="HAMAP" id="MF_00212">
    <property type="entry name" value="MQO"/>
    <property type="match status" value="1"/>
</dbReference>
<dbReference type="InterPro" id="IPR036188">
    <property type="entry name" value="FAD/NAD-bd_sf"/>
</dbReference>
<dbReference type="InterPro" id="IPR006231">
    <property type="entry name" value="MQO"/>
</dbReference>
<dbReference type="NCBIfam" id="TIGR01320">
    <property type="entry name" value="mal_quin_oxido"/>
    <property type="match status" value="1"/>
</dbReference>
<dbReference type="NCBIfam" id="NF003603">
    <property type="entry name" value="PRK05257.1-1"/>
    <property type="match status" value="1"/>
</dbReference>
<dbReference type="NCBIfam" id="NF003604">
    <property type="entry name" value="PRK05257.1-3"/>
    <property type="match status" value="1"/>
</dbReference>
<dbReference type="NCBIfam" id="NF003605">
    <property type="entry name" value="PRK05257.1-4"/>
    <property type="match status" value="1"/>
</dbReference>
<dbReference type="NCBIfam" id="NF003606">
    <property type="entry name" value="PRK05257.2-1"/>
    <property type="match status" value="1"/>
</dbReference>
<dbReference type="NCBIfam" id="NF003608">
    <property type="entry name" value="PRK05257.2-4"/>
    <property type="match status" value="1"/>
</dbReference>
<dbReference type="NCBIfam" id="NF003610">
    <property type="entry name" value="PRK05257.3-1"/>
    <property type="match status" value="1"/>
</dbReference>
<dbReference type="NCBIfam" id="NF003611">
    <property type="entry name" value="PRK05257.3-2"/>
    <property type="match status" value="1"/>
</dbReference>
<dbReference type="NCBIfam" id="NF003613">
    <property type="entry name" value="PRK05257.3-4"/>
    <property type="match status" value="1"/>
</dbReference>
<dbReference type="NCBIfam" id="NF003614">
    <property type="entry name" value="PRK05257.3-5"/>
    <property type="match status" value="1"/>
</dbReference>
<dbReference type="NCBIfam" id="NF009875">
    <property type="entry name" value="PRK13339.1"/>
    <property type="match status" value="1"/>
</dbReference>
<dbReference type="PANTHER" id="PTHR43104">
    <property type="entry name" value="L-2-HYDROXYGLUTARATE DEHYDROGENASE, MITOCHONDRIAL"/>
    <property type="match status" value="1"/>
</dbReference>
<dbReference type="PANTHER" id="PTHR43104:SF2">
    <property type="entry name" value="L-2-HYDROXYGLUTARATE DEHYDROGENASE, MITOCHONDRIAL"/>
    <property type="match status" value="1"/>
</dbReference>
<dbReference type="Pfam" id="PF06039">
    <property type="entry name" value="Mqo"/>
    <property type="match status" value="1"/>
</dbReference>
<dbReference type="SUPFAM" id="SSF51905">
    <property type="entry name" value="FAD/NAD(P)-binding domain"/>
    <property type="match status" value="1"/>
</dbReference>
<gene>
    <name evidence="1" type="primary">mqo</name>
    <name type="ordered locus">FP1752</name>
</gene>